<keyword id="KW-0067">ATP-binding</keyword>
<keyword id="KW-0418">Kinase</keyword>
<keyword id="KW-0460">Magnesium</keyword>
<keyword id="KW-0479">Metal-binding</keyword>
<keyword id="KW-0547">Nucleotide-binding</keyword>
<keyword id="KW-1185">Reference proteome</keyword>
<keyword id="KW-0711">Selenium</keyword>
<keyword id="KW-0808">Transferase</keyword>
<name>SELD_PASMU</name>
<gene>
    <name evidence="1" type="primary">selD</name>
    <name type="ordered locus">PM0790</name>
</gene>
<sequence length="351" mass="37267">MNDTIASTVRLTQYSHGAGCGCKISPKVLEKILHSDMEKWVDPHLLVGNETKDDAAVYDIGNGIGIISTTDFFMPIVDDPFDFGRIAATNAISDIFAMGGKPIMAIAILGFPIKLLPPEVAQRIVDGGRFACRQAGITLAGGHSIDAPEPIFGLAVTGIINTDKVKKNASATAGCKLFLTKPLGIGVLTTAEKKGKLKAEHQGLATEVMCQMNTIGAKFAEIAGISAMTDVTGFGLLGHLSELCEGSGVRAEVYFDKIKTLDGVQRYIEKGCIPGGTERNFESYGHKIGAMSDLQKAILCDPQTSGGLLIAVDADSEQQVLEIAADDSIELFEVGRLFAKEHDSPILITVL</sequence>
<feature type="chain" id="PRO_0000127628" description="Selenide, water dikinase">
    <location>
        <begin position="1"/>
        <end position="351"/>
    </location>
</feature>
<feature type="active site" evidence="1">
    <location>
        <position position="20"/>
    </location>
</feature>
<feature type="binding site" description="in other chain" evidence="1">
    <location>
        <position position="23"/>
    </location>
    <ligand>
        <name>ATP</name>
        <dbReference type="ChEBI" id="CHEBI:30616"/>
        <note>ligand shared between dimeric partners</note>
    </ligand>
</feature>
<feature type="binding site" description="in other chain" evidence="1">
    <location>
        <begin position="51"/>
        <end position="53"/>
    </location>
    <ligand>
        <name>ATP</name>
        <dbReference type="ChEBI" id="CHEBI:30616"/>
        <note>ligand shared between dimeric partners</note>
    </ligand>
</feature>
<feature type="binding site" evidence="1">
    <location>
        <position position="54"/>
    </location>
    <ligand>
        <name>Mg(2+)</name>
        <dbReference type="ChEBI" id="CHEBI:18420"/>
    </ligand>
</feature>
<feature type="binding site" description="in other chain" evidence="1">
    <location>
        <position position="71"/>
    </location>
    <ligand>
        <name>ATP</name>
        <dbReference type="ChEBI" id="CHEBI:30616"/>
        <note>ligand shared between dimeric partners</note>
    </ligand>
</feature>
<feature type="binding site" description="in other chain" evidence="1">
    <location>
        <position position="94"/>
    </location>
    <ligand>
        <name>ATP</name>
        <dbReference type="ChEBI" id="CHEBI:30616"/>
        <note>ligand shared between dimeric partners</note>
    </ligand>
</feature>
<feature type="binding site" evidence="1">
    <location>
        <position position="94"/>
    </location>
    <ligand>
        <name>Mg(2+)</name>
        <dbReference type="ChEBI" id="CHEBI:18420"/>
    </ligand>
</feature>
<feature type="binding site" evidence="1">
    <location>
        <begin position="142"/>
        <end position="144"/>
    </location>
    <ligand>
        <name>ATP</name>
        <dbReference type="ChEBI" id="CHEBI:30616"/>
        <note>ligand shared between dimeric partners</note>
    </ligand>
</feature>
<feature type="binding site" evidence="1">
    <location>
        <position position="230"/>
    </location>
    <ligand>
        <name>Mg(2+)</name>
        <dbReference type="ChEBI" id="CHEBI:18420"/>
    </ligand>
</feature>
<feature type="site" description="Important for catalytic activity" evidence="1">
    <location>
        <position position="23"/>
    </location>
</feature>
<organism>
    <name type="scientific">Pasteurella multocida (strain Pm70)</name>
    <dbReference type="NCBI Taxonomy" id="272843"/>
    <lineage>
        <taxon>Bacteria</taxon>
        <taxon>Pseudomonadati</taxon>
        <taxon>Pseudomonadota</taxon>
        <taxon>Gammaproteobacteria</taxon>
        <taxon>Pasteurellales</taxon>
        <taxon>Pasteurellaceae</taxon>
        <taxon>Pasteurella</taxon>
    </lineage>
</organism>
<accession>Q9CMM8</accession>
<proteinExistence type="inferred from homology"/>
<reference key="1">
    <citation type="journal article" date="2001" name="Proc. Natl. Acad. Sci. U.S.A.">
        <title>Complete genomic sequence of Pasteurella multocida Pm70.</title>
        <authorList>
            <person name="May B.J."/>
            <person name="Zhang Q."/>
            <person name="Li L.L."/>
            <person name="Paustian M.L."/>
            <person name="Whittam T.S."/>
            <person name="Kapur V."/>
        </authorList>
    </citation>
    <scope>NUCLEOTIDE SEQUENCE [LARGE SCALE GENOMIC DNA]</scope>
    <source>
        <strain>Pm70</strain>
    </source>
</reference>
<evidence type="ECO:0000255" key="1">
    <source>
        <dbReference type="HAMAP-Rule" id="MF_00625"/>
    </source>
</evidence>
<dbReference type="EC" id="2.7.9.3" evidence="1"/>
<dbReference type="EMBL" id="AE004439">
    <property type="protein sequence ID" value="AAK02874.1"/>
    <property type="molecule type" value="Genomic_DNA"/>
</dbReference>
<dbReference type="RefSeq" id="WP_032854290.1">
    <property type="nucleotide sequence ID" value="NC_002663.1"/>
</dbReference>
<dbReference type="SMR" id="Q9CMM8"/>
<dbReference type="STRING" id="272843.PM0790"/>
<dbReference type="EnsemblBacteria" id="AAK02874">
    <property type="protein sequence ID" value="AAK02874"/>
    <property type="gene ID" value="PM0790"/>
</dbReference>
<dbReference type="KEGG" id="pmu:PM0790"/>
<dbReference type="PATRIC" id="fig|272843.6.peg.799"/>
<dbReference type="HOGENOM" id="CLU_032859_0_1_6"/>
<dbReference type="Proteomes" id="UP000000809">
    <property type="component" value="Chromosome"/>
</dbReference>
<dbReference type="GO" id="GO:0005737">
    <property type="term" value="C:cytoplasm"/>
    <property type="evidence" value="ECO:0007669"/>
    <property type="project" value="TreeGrafter"/>
</dbReference>
<dbReference type="GO" id="GO:0005524">
    <property type="term" value="F:ATP binding"/>
    <property type="evidence" value="ECO:0007669"/>
    <property type="project" value="UniProtKB-UniRule"/>
</dbReference>
<dbReference type="GO" id="GO:0000287">
    <property type="term" value="F:magnesium ion binding"/>
    <property type="evidence" value="ECO:0007669"/>
    <property type="project" value="UniProtKB-UniRule"/>
</dbReference>
<dbReference type="GO" id="GO:0004756">
    <property type="term" value="F:selenide, water dikinase activity"/>
    <property type="evidence" value="ECO:0007669"/>
    <property type="project" value="UniProtKB-UniRule"/>
</dbReference>
<dbReference type="GO" id="GO:0016260">
    <property type="term" value="P:selenocysteine biosynthetic process"/>
    <property type="evidence" value="ECO:0007669"/>
    <property type="project" value="InterPro"/>
</dbReference>
<dbReference type="CDD" id="cd02195">
    <property type="entry name" value="SelD"/>
    <property type="match status" value="1"/>
</dbReference>
<dbReference type="FunFam" id="3.30.1330.10:FF:000003">
    <property type="entry name" value="Selenide, water dikinase"/>
    <property type="match status" value="1"/>
</dbReference>
<dbReference type="FunFam" id="3.90.650.10:FF:000004">
    <property type="entry name" value="Selenide, water dikinase"/>
    <property type="match status" value="1"/>
</dbReference>
<dbReference type="Gene3D" id="3.90.650.10">
    <property type="entry name" value="PurM-like C-terminal domain"/>
    <property type="match status" value="1"/>
</dbReference>
<dbReference type="Gene3D" id="3.30.1330.10">
    <property type="entry name" value="PurM-like, N-terminal domain"/>
    <property type="match status" value="1"/>
</dbReference>
<dbReference type="HAMAP" id="MF_00625">
    <property type="entry name" value="SelD"/>
    <property type="match status" value="1"/>
</dbReference>
<dbReference type="InterPro" id="IPR010918">
    <property type="entry name" value="PurM-like_C_dom"/>
</dbReference>
<dbReference type="InterPro" id="IPR036676">
    <property type="entry name" value="PurM-like_C_sf"/>
</dbReference>
<dbReference type="InterPro" id="IPR016188">
    <property type="entry name" value="PurM-like_N"/>
</dbReference>
<dbReference type="InterPro" id="IPR036921">
    <property type="entry name" value="PurM-like_N_sf"/>
</dbReference>
<dbReference type="InterPro" id="IPR023061">
    <property type="entry name" value="SelD_I"/>
</dbReference>
<dbReference type="InterPro" id="IPR004536">
    <property type="entry name" value="SPS/SelD"/>
</dbReference>
<dbReference type="NCBIfam" id="NF002098">
    <property type="entry name" value="PRK00943.1"/>
    <property type="match status" value="1"/>
</dbReference>
<dbReference type="NCBIfam" id="TIGR00476">
    <property type="entry name" value="selD"/>
    <property type="match status" value="1"/>
</dbReference>
<dbReference type="PANTHER" id="PTHR10256:SF0">
    <property type="entry name" value="INACTIVE SELENIDE, WATER DIKINASE-LIKE PROTEIN-RELATED"/>
    <property type="match status" value="1"/>
</dbReference>
<dbReference type="PANTHER" id="PTHR10256">
    <property type="entry name" value="SELENIDE, WATER DIKINASE"/>
    <property type="match status" value="1"/>
</dbReference>
<dbReference type="Pfam" id="PF00586">
    <property type="entry name" value="AIRS"/>
    <property type="match status" value="1"/>
</dbReference>
<dbReference type="Pfam" id="PF02769">
    <property type="entry name" value="AIRS_C"/>
    <property type="match status" value="1"/>
</dbReference>
<dbReference type="PIRSF" id="PIRSF036407">
    <property type="entry name" value="Selenphspht_syn"/>
    <property type="match status" value="1"/>
</dbReference>
<dbReference type="SUPFAM" id="SSF56042">
    <property type="entry name" value="PurM C-terminal domain-like"/>
    <property type="match status" value="1"/>
</dbReference>
<dbReference type="SUPFAM" id="SSF55326">
    <property type="entry name" value="PurM N-terminal domain-like"/>
    <property type="match status" value="1"/>
</dbReference>
<comment type="function">
    <text evidence="1">Synthesizes selenophosphate from selenide and ATP.</text>
</comment>
<comment type="catalytic activity">
    <reaction evidence="1">
        <text>hydrogenselenide + ATP + H2O = selenophosphate + AMP + phosphate + 2 H(+)</text>
        <dbReference type="Rhea" id="RHEA:18737"/>
        <dbReference type="ChEBI" id="CHEBI:15377"/>
        <dbReference type="ChEBI" id="CHEBI:15378"/>
        <dbReference type="ChEBI" id="CHEBI:16144"/>
        <dbReference type="ChEBI" id="CHEBI:29317"/>
        <dbReference type="ChEBI" id="CHEBI:30616"/>
        <dbReference type="ChEBI" id="CHEBI:43474"/>
        <dbReference type="ChEBI" id="CHEBI:456215"/>
        <dbReference type="EC" id="2.7.9.3"/>
    </reaction>
</comment>
<comment type="cofactor">
    <cofactor evidence="1">
        <name>Mg(2+)</name>
        <dbReference type="ChEBI" id="CHEBI:18420"/>
    </cofactor>
    <text evidence="1">Binds 1 Mg(2+) ion per monomer.</text>
</comment>
<comment type="subunit">
    <text evidence="1">Homodimer.</text>
</comment>
<comment type="similarity">
    <text evidence="1">Belongs to the selenophosphate synthase 1 family. Class I subfamily.</text>
</comment>
<protein>
    <recommendedName>
        <fullName evidence="1">Selenide, water dikinase</fullName>
        <ecNumber evidence="1">2.7.9.3</ecNumber>
    </recommendedName>
    <alternativeName>
        <fullName evidence="1">Selenium donor protein</fullName>
    </alternativeName>
    <alternativeName>
        <fullName evidence="1">Selenophosphate synthase</fullName>
    </alternativeName>
</protein>